<sequence length="262" mass="29000">MLGFRHVIRATSKRFATSGTSMVRKTVTSGNSNAIRSATSNVVPPASSAAAASAPSTIKRVPGYNKTLEDSLNGTILENPVETQATQSSNEINWYTSYHGIGSKPFSDETQNALSSALNADDIEIKPDGLIYLPEIKYRRILNKAFGPGGWGLVPRSETIVTAKLVTREYALVCHGQMVSIARGEQDYFSETGIPTATEGCKSNALMRCCKDLGIGSELWDPVFIKQYKKKHCTEKFVEHVTTKKKKKIWLRKDREVEYPYK</sequence>
<evidence type="ECO:0000250" key="1"/>
<evidence type="ECO:0000255" key="2"/>
<evidence type="ECO:0000305" key="3"/>
<protein>
    <recommendedName>
        <fullName>Mitochondrial genome maintenance protein MGM101</fullName>
    </recommendedName>
</protein>
<accession>Q00970</accession>
<accession>Q6CWI9</accession>
<comment type="function">
    <text evidence="1">Performs an essential function in the repair of oxidatively damaged mtDNA that is required for the maintenance of the mitochondrial genome. Binds to DNA (By similarity).</text>
</comment>
<comment type="subcellular location">
    <subcellularLocation>
        <location evidence="3">Mitochondrion matrix</location>
        <location evidence="3">Mitochondrion nucleoid</location>
    </subcellularLocation>
</comment>
<comment type="similarity">
    <text evidence="3">Belongs to the MGM101 family.</text>
</comment>
<feature type="transit peptide" description="Mitochondrion" evidence="2">
    <location>
        <begin position="1"/>
        <end status="unknown"/>
    </location>
</feature>
<feature type="chain" id="PRO_0000021718" description="Mitochondrial genome maintenance protein MGM101">
    <location>
        <begin status="unknown"/>
        <end position="262"/>
    </location>
</feature>
<feature type="sequence conflict" description="In Ref. 1; AAA86264." evidence="3" ref="1">
    <original>C</original>
    <variation>S</variation>
    <location>
        <position position="201"/>
    </location>
</feature>
<reference key="1">
    <citation type="journal article" date="1996" name="Mol. Gen. Genet.">
        <title>A vital function for mitochondrial DNA in the petite-negative yeast Kluyveromyces lactis.</title>
        <authorList>
            <person name="Clark-Walker G.D."/>
            <person name="Chen X.J."/>
        </authorList>
    </citation>
    <scope>NUCLEOTIDE SEQUENCE [GENOMIC DNA]</scope>
    <source>
        <strain>ATCC 76492 / CBS 2359/152 / CLIB 210</strain>
    </source>
</reference>
<reference key="2">
    <citation type="journal article" date="2004" name="Nature">
        <title>Genome evolution in yeasts.</title>
        <authorList>
            <person name="Dujon B."/>
            <person name="Sherman D."/>
            <person name="Fischer G."/>
            <person name="Durrens P."/>
            <person name="Casaregola S."/>
            <person name="Lafontaine I."/>
            <person name="de Montigny J."/>
            <person name="Marck C."/>
            <person name="Neuveglise C."/>
            <person name="Talla E."/>
            <person name="Goffard N."/>
            <person name="Frangeul L."/>
            <person name="Aigle M."/>
            <person name="Anthouard V."/>
            <person name="Babour A."/>
            <person name="Barbe V."/>
            <person name="Barnay S."/>
            <person name="Blanchin S."/>
            <person name="Beckerich J.-M."/>
            <person name="Beyne E."/>
            <person name="Bleykasten C."/>
            <person name="Boisrame A."/>
            <person name="Boyer J."/>
            <person name="Cattolico L."/>
            <person name="Confanioleri F."/>
            <person name="de Daruvar A."/>
            <person name="Despons L."/>
            <person name="Fabre E."/>
            <person name="Fairhead C."/>
            <person name="Ferry-Dumazet H."/>
            <person name="Groppi A."/>
            <person name="Hantraye F."/>
            <person name="Hennequin C."/>
            <person name="Jauniaux N."/>
            <person name="Joyet P."/>
            <person name="Kachouri R."/>
            <person name="Kerrest A."/>
            <person name="Koszul R."/>
            <person name="Lemaire M."/>
            <person name="Lesur I."/>
            <person name="Ma L."/>
            <person name="Muller H."/>
            <person name="Nicaud J.-M."/>
            <person name="Nikolski M."/>
            <person name="Oztas S."/>
            <person name="Ozier-Kalogeropoulos O."/>
            <person name="Pellenz S."/>
            <person name="Potier S."/>
            <person name="Richard G.-F."/>
            <person name="Straub M.-L."/>
            <person name="Suleau A."/>
            <person name="Swennen D."/>
            <person name="Tekaia F."/>
            <person name="Wesolowski-Louvel M."/>
            <person name="Westhof E."/>
            <person name="Wirth B."/>
            <person name="Zeniou-Meyer M."/>
            <person name="Zivanovic Y."/>
            <person name="Bolotin-Fukuhara M."/>
            <person name="Thierry A."/>
            <person name="Bouchier C."/>
            <person name="Caudron B."/>
            <person name="Scarpelli C."/>
            <person name="Gaillardin C."/>
            <person name="Weissenbach J."/>
            <person name="Wincker P."/>
            <person name="Souciet J.-L."/>
        </authorList>
    </citation>
    <scope>NUCLEOTIDE SEQUENCE [LARGE SCALE GENOMIC DNA]</scope>
    <source>
        <strain>ATCC 8585 / CBS 2359 / DSM 70799 / NBRC 1267 / NRRL Y-1140 / WM37</strain>
    </source>
</reference>
<proteinExistence type="inferred from homology"/>
<gene>
    <name type="primary">MGM101</name>
    <name type="ordered locus">KLLA0B03740g</name>
</gene>
<name>MG101_KLULA</name>
<organism>
    <name type="scientific">Kluyveromyces lactis (strain ATCC 8585 / CBS 2359 / DSM 70799 / NBRC 1267 / NRRL Y-1140 / WM37)</name>
    <name type="common">Yeast</name>
    <name type="synonym">Candida sphaerica</name>
    <dbReference type="NCBI Taxonomy" id="284590"/>
    <lineage>
        <taxon>Eukaryota</taxon>
        <taxon>Fungi</taxon>
        <taxon>Dikarya</taxon>
        <taxon>Ascomycota</taxon>
        <taxon>Saccharomycotina</taxon>
        <taxon>Saccharomycetes</taxon>
        <taxon>Saccharomycetales</taxon>
        <taxon>Saccharomycetaceae</taxon>
        <taxon>Kluyveromyces</taxon>
    </lineage>
</organism>
<dbReference type="EMBL" id="U43558">
    <property type="protein sequence ID" value="AAA86264.1"/>
    <property type="molecule type" value="Genomic_DNA"/>
</dbReference>
<dbReference type="EMBL" id="CR382122">
    <property type="protein sequence ID" value="CAH02093.1"/>
    <property type="molecule type" value="Genomic_DNA"/>
</dbReference>
<dbReference type="PIR" id="S72480">
    <property type="entry name" value="S72480"/>
</dbReference>
<dbReference type="RefSeq" id="XP_451700.1">
    <property type="nucleotide sequence ID" value="XM_451700.1"/>
</dbReference>
<dbReference type="FunCoup" id="Q00970">
    <property type="interactions" value="310"/>
</dbReference>
<dbReference type="STRING" id="284590.Q00970"/>
<dbReference type="PaxDb" id="284590-Q00970"/>
<dbReference type="KEGG" id="kla:KLLA0_B03740g"/>
<dbReference type="eggNOG" id="ENOG502RXU4">
    <property type="taxonomic scope" value="Eukaryota"/>
</dbReference>
<dbReference type="HOGENOM" id="CLU_028692_1_0_1"/>
<dbReference type="InParanoid" id="Q00970"/>
<dbReference type="OMA" id="INWETSW"/>
<dbReference type="Proteomes" id="UP000000598">
    <property type="component" value="Chromosome B"/>
</dbReference>
<dbReference type="GO" id="GO:0000262">
    <property type="term" value="C:mitochondrial chromosome"/>
    <property type="evidence" value="ECO:0007669"/>
    <property type="project" value="InterPro"/>
</dbReference>
<dbReference type="GO" id="GO:0003697">
    <property type="term" value="F:single-stranded DNA binding"/>
    <property type="evidence" value="ECO:0007669"/>
    <property type="project" value="InterPro"/>
</dbReference>
<dbReference type="GO" id="GO:0036297">
    <property type="term" value="P:interstrand cross-link repair"/>
    <property type="evidence" value="ECO:0007669"/>
    <property type="project" value="TreeGrafter"/>
</dbReference>
<dbReference type="GO" id="GO:0000002">
    <property type="term" value="P:mitochondrial genome maintenance"/>
    <property type="evidence" value="ECO:0007669"/>
    <property type="project" value="InterPro"/>
</dbReference>
<dbReference type="GO" id="GO:0000725">
    <property type="term" value="P:recombinational repair"/>
    <property type="evidence" value="ECO:0007669"/>
    <property type="project" value="TreeGrafter"/>
</dbReference>
<dbReference type="InterPro" id="IPR009446">
    <property type="entry name" value="Mgm101"/>
</dbReference>
<dbReference type="PANTHER" id="PTHR31404">
    <property type="entry name" value="MITOCHONDRIAL GENOME MAINTENANCE PROTEIN MGM101"/>
    <property type="match status" value="1"/>
</dbReference>
<dbReference type="PANTHER" id="PTHR31404:SF0">
    <property type="entry name" value="MITOCHONDRIAL GENOME MAINTENANCE PROTEIN MGM101"/>
    <property type="match status" value="1"/>
</dbReference>
<dbReference type="Pfam" id="PF06420">
    <property type="entry name" value="Mgm101p"/>
    <property type="match status" value="1"/>
</dbReference>
<keyword id="KW-0227">DNA damage</keyword>
<keyword id="KW-0234">DNA repair</keyword>
<keyword id="KW-0238">DNA-binding</keyword>
<keyword id="KW-0496">Mitochondrion</keyword>
<keyword id="KW-1135">Mitochondrion nucleoid</keyword>
<keyword id="KW-1185">Reference proteome</keyword>
<keyword id="KW-0809">Transit peptide</keyword>